<comment type="function">
    <text>Involved in nuclear basic protein transition: histones are replaced by spermatid specific proteins which are themselves replaced by protamines in late spermatids.</text>
</comment>
<comment type="subcellular location">
    <subcellularLocation>
        <location>Nucleus</location>
    </subcellularLocation>
    <subcellularLocation>
        <location>Chromosome</location>
    </subcellularLocation>
</comment>
<comment type="tissue specificity">
    <text>Sperm.</text>
</comment>
<keyword id="KW-0158">Chromosome</keyword>
<keyword id="KW-0217">Developmental protein</keyword>
<keyword id="KW-0221">Differentiation</keyword>
<keyword id="KW-0903">Direct protein sequencing</keyword>
<keyword id="KW-0238">DNA-binding</keyword>
<keyword id="KW-0544">Nucleosome core</keyword>
<keyword id="KW-0539">Nucleus</keyword>
<keyword id="KW-0744">Spermatogenesis</keyword>
<accession>P35422</accession>
<feature type="chain" id="PRO_0000106636" description="Sperm-specific protein Phi-1">
    <location>
        <begin position="1"/>
        <end position="35" status="greater than"/>
    </location>
</feature>
<feature type="region of interest" description="Disordered" evidence="1">
    <location>
        <begin position="1"/>
        <end position="35"/>
    </location>
</feature>
<feature type="compositionally biased region" description="Basic residues" evidence="1">
    <location>
        <begin position="1"/>
        <end position="17"/>
    </location>
</feature>
<feature type="compositionally biased region" description="Basic residues" evidence="1">
    <location>
        <begin position="25"/>
        <end position="35"/>
    </location>
</feature>
<feature type="non-terminal residue">
    <location>
        <position position="35"/>
    </location>
</feature>
<dbReference type="PIR" id="B45316">
    <property type="entry name" value="B45316"/>
</dbReference>
<dbReference type="GO" id="GO:0000786">
    <property type="term" value="C:nucleosome"/>
    <property type="evidence" value="ECO:0007669"/>
    <property type="project" value="UniProtKB-KW"/>
</dbReference>
<dbReference type="GO" id="GO:0005634">
    <property type="term" value="C:nucleus"/>
    <property type="evidence" value="ECO:0007669"/>
    <property type="project" value="UniProtKB-SubCell"/>
</dbReference>
<dbReference type="GO" id="GO:0003677">
    <property type="term" value="F:DNA binding"/>
    <property type="evidence" value="ECO:0007669"/>
    <property type="project" value="UniProtKB-KW"/>
</dbReference>
<dbReference type="GO" id="GO:0030154">
    <property type="term" value="P:cell differentiation"/>
    <property type="evidence" value="ECO:0007669"/>
    <property type="project" value="UniProtKB-KW"/>
</dbReference>
<dbReference type="GO" id="GO:0007283">
    <property type="term" value="P:spermatogenesis"/>
    <property type="evidence" value="ECO:0007669"/>
    <property type="project" value="UniProtKB-KW"/>
</dbReference>
<protein>
    <recommendedName>
        <fullName>Sperm-specific protein Phi-1</fullName>
    </recommendedName>
    <alternativeName>
        <fullName>PL-III</fullName>
    </alternativeName>
    <alternativeName>
        <fullName>Sperm-specific protamine-like protein</fullName>
    </alternativeName>
</protein>
<sequence>PSPTRRSKSRSKSRSRSRSASAGKAAKRAKSKTAK</sequence>
<evidence type="ECO:0000256" key="1">
    <source>
        <dbReference type="SAM" id="MobiDB-lite"/>
    </source>
</evidence>
<reference key="1">
    <citation type="journal article" date="1993" name="J. Biol. Chem.">
        <title>Sequence and characterization of a sperm-specific histone H1-like protein of Mytilus californianus.</title>
        <authorList>
            <person name="Carlos S."/>
            <person name="Jutglar L."/>
            <person name="Borrell I."/>
            <person name="Hunt D.F."/>
            <person name="Ausio J."/>
        </authorList>
    </citation>
    <scope>PROTEIN SEQUENCE</scope>
    <source>
        <tissue>Sperm</tissue>
    </source>
</reference>
<organism>
    <name type="scientific">Mytilus californianus</name>
    <name type="common">California mussel</name>
    <dbReference type="NCBI Taxonomy" id="6549"/>
    <lineage>
        <taxon>Eukaryota</taxon>
        <taxon>Metazoa</taxon>
        <taxon>Spiralia</taxon>
        <taxon>Lophotrochozoa</taxon>
        <taxon>Mollusca</taxon>
        <taxon>Bivalvia</taxon>
        <taxon>Autobranchia</taxon>
        <taxon>Pteriomorphia</taxon>
        <taxon>Mytilida</taxon>
        <taxon>Mytiloidea</taxon>
        <taxon>Mytilidae</taxon>
        <taxon>Mytilinae</taxon>
        <taxon>Mytilus</taxon>
    </lineage>
</organism>
<proteinExistence type="evidence at protein level"/>
<name>PHI1_MYTCA</name>